<organism>
    <name type="scientific">Aquarana catesbeiana</name>
    <name type="common">American bullfrog</name>
    <name type="synonym">Rana catesbeiana</name>
    <dbReference type="NCBI Taxonomy" id="8400"/>
    <lineage>
        <taxon>Eukaryota</taxon>
        <taxon>Metazoa</taxon>
        <taxon>Chordata</taxon>
        <taxon>Craniata</taxon>
        <taxon>Vertebrata</taxon>
        <taxon>Euteleostomi</taxon>
        <taxon>Amphibia</taxon>
        <taxon>Batrachia</taxon>
        <taxon>Anura</taxon>
        <taxon>Neobatrachia</taxon>
        <taxon>Ranoidea</taxon>
        <taxon>Ranidae</taxon>
        <taxon>Aquarana</taxon>
    </lineage>
</organism>
<comment type="function">
    <text evidence="1 3">Plays a crucial role in the metabolism of thyroid hormones (TH) and has specific roles in TH activation and inactivation by deiodination. Catalyzes the deiodination of L-thyroxine (T4) to 3,3',5'-triiodothyronine (rT3), 3,5-diiodothyronine (3,5-T2) to 3-monoiodothyronine (3-T1), rT3 to 3',5'-diiodothyronine (3',5'-T2) and 3,3'-diiodothyronine (3,3'-T2) to 3'-monoiodothyronine (3'-T1) via inner-ring deiodination (IRD) (By similarity). Catalyzes the deiodination of 3,5,3'-triiodothyronine (T3) to 3,3'-diiodothyronine (3,3'-T2) via IRD(PubMed:7664662). Catalyzes the deiodination of 3-T1 to L-thyronine (T0) via outer-ring deiodination (ORD) (By similarity). Catalyzes the tyrosyl ring deiodinations of 3,3',5,5'-tetraiodothyronamine, 3,3',5'-triiodothyronamine, 3,5,3'-triiodothyronamine, 3,5-diiodothyronamine, 3,3'-diiodothyronamine and 3-iodothyronamine (By similarity).</text>
</comment>
<comment type="catalytic activity">
    <reaction evidence="1">
        <text>3,3',5'-triiodo-L-thyronine + iodide + A + H(+) = L-thyroxine + AH2</text>
        <dbReference type="Rhea" id="RHEA:18897"/>
        <dbReference type="ChEBI" id="CHEBI:13193"/>
        <dbReference type="ChEBI" id="CHEBI:15378"/>
        <dbReference type="ChEBI" id="CHEBI:16382"/>
        <dbReference type="ChEBI" id="CHEBI:17499"/>
        <dbReference type="ChEBI" id="CHEBI:57261"/>
        <dbReference type="ChEBI" id="CHEBI:58448"/>
        <dbReference type="EC" id="1.21.99.3"/>
    </reaction>
    <physiologicalReaction direction="right-to-left" evidence="1">
        <dbReference type="Rhea" id="RHEA:18899"/>
    </physiologicalReaction>
</comment>
<comment type="catalytic activity">
    <reaction evidence="3">
        <text>3,3'-diiodo-L-thyronine + iodide + A + H(+) = 3,3',5-triiodo-L-thyronine + AH2</text>
        <dbReference type="Rhea" id="RHEA:82571"/>
        <dbReference type="ChEBI" id="CHEBI:13193"/>
        <dbReference type="ChEBI" id="CHEBI:15378"/>
        <dbReference type="ChEBI" id="CHEBI:16382"/>
        <dbReference type="ChEBI" id="CHEBI:17499"/>
        <dbReference type="ChEBI" id="CHEBI:176514"/>
        <dbReference type="ChEBI" id="CHEBI:533015"/>
    </reaction>
    <physiologicalReaction direction="right-to-left" evidence="5">
        <dbReference type="Rhea" id="RHEA:82573"/>
    </physiologicalReaction>
</comment>
<comment type="catalytic activity">
    <reaction evidence="1">
        <text>3-iodo-L-thyronine + iodide + A + H(+) = 3,5-diiodo-L-thyronine + AH2</text>
        <dbReference type="Rhea" id="RHEA:82895"/>
        <dbReference type="ChEBI" id="CHEBI:13193"/>
        <dbReference type="ChEBI" id="CHEBI:15378"/>
        <dbReference type="ChEBI" id="CHEBI:16382"/>
        <dbReference type="ChEBI" id="CHEBI:17499"/>
        <dbReference type="ChEBI" id="CHEBI:232626"/>
        <dbReference type="ChEBI" id="CHEBI:232627"/>
    </reaction>
    <physiologicalReaction direction="right-to-left" evidence="1">
        <dbReference type="Rhea" id="RHEA:82897"/>
    </physiologicalReaction>
</comment>
<comment type="catalytic activity">
    <reaction evidence="1">
        <text>L-thyronine + iodide + A + H(+) = 3-iodo-L-thyronine + AH2</text>
        <dbReference type="Rhea" id="RHEA:83771"/>
        <dbReference type="ChEBI" id="CHEBI:13193"/>
        <dbReference type="ChEBI" id="CHEBI:15378"/>
        <dbReference type="ChEBI" id="CHEBI:16382"/>
        <dbReference type="ChEBI" id="CHEBI:17499"/>
        <dbReference type="ChEBI" id="CHEBI:232627"/>
        <dbReference type="ChEBI" id="CHEBI:233333"/>
    </reaction>
    <physiologicalReaction direction="right-to-left" evidence="1">
        <dbReference type="Rhea" id="RHEA:83773"/>
    </physiologicalReaction>
</comment>
<comment type="catalytic activity">
    <reaction evidence="1">
        <text>3',5'-diiodo-L-thyronine + iodide + A + H(+) = 3,3',5'-triiodo-L-thyronine + AH2</text>
        <dbReference type="Rhea" id="RHEA:83775"/>
        <dbReference type="ChEBI" id="CHEBI:13193"/>
        <dbReference type="ChEBI" id="CHEBI:15378"/>
        <dbReference type="ChEBI" id="CHEBI:16382"/>
        <dbReference type="ChEBI" id="CHEBI:17499"/>
        <dbReference type="ChEBI" id="CHEBI:57261"/>
        <dbReference type="ChEBI" id="CHEBI:195762"/>
    </reaction>
    <physiologicalReaction direction="right-to-left" evidence="1">
        <dbReference type="Rhea" id="RHEA:83777"/>
    </physiologicalReaction>
</comment>
<comment type="catalytic activity">
    <reaction evidence="1">
        <text>3'-iodo-L-thyronine + iodide + A + H(+) = 3,3'-diiodo-L-thyronine + AH2</text>
        <dbReference type="Rhea" id="RHEA:83779"/>
        <dbReference type="ChEBI" id="CHEBI:13193"/>
        <dbReference type="ChEBI" id="CHEBI:15378"/>
        <dbReference type="ChEBI" id="CHEBI:16382"/>
        <dbReference type="ChEBI" id="CHEBI:17499"/>
        <dbReference type="ChEBI" id="CHEBI:176514"/>
        <dbReference type="ChEBI" id="CHEBI:232695"/>
    </reaction>
    <physiologicalReaction direction="right-to-left" evidence="1">
        <dbReference type="Rhea" id="RHEA:83781"/>
    </physiologicalReaction>
</comment>
<comment type="catalytic activity">
    <reaction evidence="1">
        <text>3,3',5'-triiodothyronamine + iodide + A + H(+) = 3,3',5,5'-tetraiodothyronamine + AH2</text>
        <dbReference type="Rhea" id="RHEA:83807"/>
        <dbReference type="ChEBI" id="CHEBI:13193"/>
        <dbReference type="ChEBI" id="CHEBI:15378"/>
        <dbReference type="ChEBI" id="CHEBI:16382"/>
        <dbReference type="ChEBI" id="CHEBI:17499"/>
        <dbReference type="ChEBI" id="CHEBI:233343"/>
        <dbReference type="ChEBI" id="CHEBI:233344"/>
    </reaction>
    <physiologicalReaction direction="right-to-left" evidence="1">
        <dbReference type="Rhea" id="RHEA:83809"/>
    </physiologicalReaction>
</comment>
<comment type="catalytic activity">
    <reaction evidence="1">
        <text>3',5'-diiodothyronamine + iodide + A + H(+) = 3,3',5'-triiodothyronamine + AH2</text>
        <dbReference type="Rhea" id="RHEA:83799"/>
        <dbReference type="ChEBI" id="CHEBI:13193"/>
        <dbReference type="ChEBI" id="CHEBI:15378"/>
        <dbReference type="ChEBI" id="CHEBI:16382"/>
        <dbReference type="ChEBI" id="CHEBI:17499"/>
        <dbReference type="ChEBI" id="CHEBI:233342"/>
        <dbReference type="ChEBI" id="CHEBI:233343"/>
    </reaction>
    <physiologicalReaction direction="right-to-left" evidence="1">
        <dbReference type="Rhea" id="RHEA:83801"/>
    </physiologicalReaction>
</comment>
<comment type="catalytic activity">
    <reaction evidence="1">
        <text>3,3'-diiodothyronamine + iodide + A + H(+) = 3,3',5-triiodothyronamine + AH2</text>
        <dbReference type="Rhea" id="RHEA:83811"/>
        <dbReference type="ChEBI" id="CHEBI:13193"/>
        <dbReference type="ChEBI" id="CHEBI:15378"/>
        <dbReference type="ChEBI" id="CHEBI:16382"/>
        <dbReference type="ChEBI" id="CHEBI:17499"/>
        <dbReference type="ChEBI" id="CHEBI:233341"/>
        <dbReference type="ChEBI" id="CHEBI:233426"/>
    </reaction>
    <physiologicalReaction direction="right-to-left" evidence="1">
        <dbReference type="Rhea" id="RHEA:83813"/>
    </physiologicalReaction>
</comment>
<comment type="catalytic activity">
    <reaction evidence="1">
        <text>3-iodothyronamine + iodide + A + H(+) = 3,5-diiodothyronamine + AH2</text>
        <dbReference type="Rhea" id="RHEA:83823"/>
        <dbReference type="ChEBI" id="CHEBI:13193"/>
        <dbReference type="ChEBI" id="CHEBI:15378"/>
        <dbReference type="ChEBI" id="CHEBI:16382"/>
        <dbReference type="ChEBI" id="CHEBI:17499"/>
        <dbReference type="ChEBI" id="CHEBI:231647"/>
        <dbReference type="ChEBI" id="CHEBI:233340"/>
    </reaction>
    <physiologicalReaction direction="right-to-left" evidence="1">
        <dbReference type="Rhea" id="RHEA:83825"/>
    </physiologicalReaction>
</comment>
<comment type="catalytic activity">
    <reaction evidence="1">
        <text>3'-iodothyronamine + iodide + A + H(+) = 3,3'-diiodothyronamine + AH2</text>
        <dbReference type="Rhea" id="RHEA:83815"/>
        <dbReference type="ChEBI" id="CHEBI:13193"/>
        <dbReference type="ChEBI" id="CHEBI:15378"/>
        <dbReference type="ChEBI" id="CHEBI:16382"/>
        <dbReference type="ChEBI" id="CHEBI:17499"/>
        <dbReference type="ChEBI" id="CHEBI:233339"/>
        <dbReference type="ChEBI" id="CHEBI:233341"/>
    </reaction>
    <physiologicalReaction direction="right-to-left" evidence="1">
        <dbReference type="Rhea" id="RHEA:83817"/>
    </physiologicalReaction>
</comment>
<comment type="catalytic activity">
    <reaction evidence="1">
        <text>thyronamine + iodide + A + H(+) = 3-iodothyronamine + AH2</text>
        <dbReference type="Rhea" id="RHEA:83819"/>
        <dbReference type="ChEBI" id="CHEBI:13193"/>
        <dbReference type="ChEBI" id="CHEBI:15378"/>
        <dbReference type="ChEBI" id="CHEBI:16382"/>
        <dbReference type="ChEBI" id="CHEBI:17499"/>
        <dbReference type="ChEBI" id="CHEBI:231647"/>
        <dbReference type="ChEBI" id="CHEBI:233334"/>
    </reaction>
    <physiologicalReaction direction="right-to-left" evidence="1">
        <dbReference type="Rhea" id="RHEA:83821"/>
    </physiologicalReaction>
</comment>
<comment type="subunit">
    <text evidence="1">Monomer. Homodimer. May undergo minor heretodimerization with DIO1 and DIO2 (By similarity).</text>
</comment>
<comment type="subcellular location">
    <subcellularLocation>
        <location evidence="1">Cell membrane</location>
        <topology evidence="2">Single-pass type II membrane protein</topology>
    </subcellularLocation>
    <subcellularLocation>
        <location evidence="1">Endosome membrane</location>
        <topology evidence="2">Single-pass type II membrane protein</topology>
    </subcellularLocation>
</comment>
<comment type="similarity">
    <text evidence="4">Belongs to the iodothyronine deiodinase family.</text>
</comment>
<sequence length="269" mass="30140">MLPAPHTCCRLLQQLLACCLLLPRFLLTVLLLWLLDFPCVRRRVIRGAKEEDPGAPEREDPPLCVSDTNRMCTLESLKAVWYGQKLDFFKSAHLGGGAPNTEVVTLEGQRLCRILDFSKGHRPLVLNFGSCTUPPFMARLQAYQRLAAQRLDFADFLLVYIEEAHPCDGWLSTDAAYQIPTHQCLQDRLRAAQLMLQGAPGCRVVADTMTNASNAAYGAYFERLYVILDGKVVYQGGRGPEGYKIGELRNWLDQYQTRATGNGALVIQV</sequence>
<feature type="chain" id="PRO_0000154327" description="Thyroxine 5-deiodinase">
    <location>
        <begin position="1"/>
        <end position="269"/>
    </location>
</feature>
<feature type="topological domain" description="Cytoplasmic" evidence="2">
    <location>
        <begin position="1"/>
        <end position="14"/>
    </location>
</feature>
<feature type="transmembrane region" description="Helical; Signal-anchor for type II membrane protein" evidence="2">
    <location>
        <begin position="15"/>
        <end position="35"/>
    </location>
</feature>
<feature type="topological domain" description="Extracellular" evidence="2">
    <location>
        <begin position="36"/>
        <end position="269"/>
    </location>
</feature>
<feature type="active site" evidence="1">
    <location>
        <position position="133"/>
    </location>
</feature>
<feature type="non-standard amino acid" description="Selenocysteine" evidence="1">
    <location>
        <position position="133"/>
    </location>
</feature>
<reference key="1">
    <citation type="journal article" date="1995" name="Endocrinology">
        <title>The type III 5-deiodinase in Rana catesbeiana tadpoles is encoded by a thyroid hormone-responsive gene.</title>
        <authorList>
            <person name="Becker K.B."/>
            <person name="Schneider M.J."/>
            <person name="Davey J.C."/>
            <person name="Galton V.A."/>
        </authorList>
    </citation>
    <scope>NUCLEOTIDE SEQUENCE [MRNA]</scope>
    <scope>FUNCTION</scope>
    <scope>CATALYTIC ACTIVITY</scope>
    <source>
        <tissue>Tail</tissue>
    </source>
</reference>
<evidence type="ECO:0000250" key="1">
    <source>
        <dbReference type="UniProtKB" id="P55073"/>
    </source>
</evidence>
<evidence type="ECO:0000255" key="2"/>
<evidence type="ECO:0000269" key="3">
    <source>
    </source>
</evidence>
<evidence type="ECO:0000305" key="4"/>
<evidence type="ECO:0000305" key="5">
    <source>
    </source>
</evidence>
<keyword id="KW-1003">Cell membrane</keyword>
<keyword id="KW-0967">Endosome</keyword>
<keyword id="KW-0472">Membrane</keyword>
<keyword id="KW-0560">Oxidoreductase</keyword>
<keyword id="KW-0712">Selenocysteine</keyword>
<keyword id="KW-0735">Signal-anchor</keyword>
<keyword id="KW-0893">Thyroid hormones biosynthesis</keyword>
<keyword id="KW-0812">Transmembrane</keyword>
<keyword id="KW-1133">Transmembrane helix</keyword>
<name>IOD3_AQUCT</name>
<proteinExistence type="evidence at protein level"/>
<protein>
    <recommendedName>
        <fullName>Thyroxine 5-deiodinase</fullName>
        <ecNumber evidence="1">1.21.99.3</ecNumber>
    </recommendedName>
    <alternativeName>
        <fullName>5DIII</fullName>
    </alternativeName>
    <alternativeName>
        <fullName>DIOIII</fullName>
    </alternativeName>
    <alternativeName>
        <fullName>Type 3 DI</fullName>
    </alternativeName>
    <alternativeName>
        <fullName>Type III iodothyronine deiodinase</fullName>
    </alternativeName>
</protein>
<accession>P49898</accession>
<gene>
    <name type="primary">dio3</name>
    <name type="synonym">itdi3</name>
    <name type="synonym">txdi3</name>
</gene>
<dbReference type="EC" id="1.21.99.3" evidence="1"/>
<dbReference type="EMBL" id="L41731">
    <property type="protein sequence ID" value="AAA82941.2"/>
    <property type="molecule type" value="mRNA"/>
</dbReference>
<dbReference type="PIR" id="I51163">
    <property type="entry name" value="I51163"/>
</dbReference>
<dbReference type="GO" id="GO:0010008">
    <property type="term" value="C:endosome membrane"/>
    <property type="evidence" value="ECO:0007669"/>
    <property type="project" value="UniProtKB-SubCell"/>
</dbReference>
<dbReference type="GO" id="GO:0005886">
    <property type="term" value="C:plasma membrane"/>
    <property type="evidence" value="ECO:0007669"/>
    <property type="project" value="UniProtKB-SubCell"/>
</dbReference>
<dbReference type="GO" id="GO:0004800">
    <property type="term" value="F:thyroxine 5'-deiodinase activity"/>
    <property type="evidence" value="ECO:0007669"/>
    <property type="project" value="InterPro"/>
</dbReference>
<dbReference type="GO" id="GO:0033798">
    <property type="term" value="F:thyroxine 5-deiodinase activity"/>
    <property type="evidence" value="ECO:0000250"/>
    <property type="project" value="UniProtKB"/>
</dbReference>
<dbReference type="GO" id="GO:0042446">
    <property type="term" value="P:hormone biosynthetic process"/>
    <property type="evidence" value="ECO:0007669"/>
    <property type="project" value="UniProtKB-KW"/>
</dbReference>
<dbReference type="GO" id="GO:0042404">
    <property type="term" value="P:thyroid hormone catabolic process"/>
    <property type="evidence" value="ECO:0000314"/>
    <property type="project" value="UniProtKB"/>
</dbReference>
<dbReference type="FunFam" id="3.40.30.10:FF:000239">
    <property type="entry name" value="Iodothyronine deiodinase"/>
    <property type="match status" value="1"/>
</dbReference>
<dbReference type="Gene3D" id="3.40.30.10">
    <property type="entry name" value="Glutaredoxin"/>
    <property type="match status" value="1"/>
</dbReference>
<dbReference type="InterPro" id="IPR000643">
    <property type="entry name" value="Iodothyronine_deiodinase"/>
</dbReference>
<dbReference type="InterPro" id="IPR008261">
    <property type="entry name" value="Iodothyronine_deiodinase_AS"/>
</dbReference>
<dbReference type="InterPro" id="IPR027252">
    <property type="entry name" value="Iodothyronine_deiodinase_I/III"/>
</dbReference>
<dbReference type="PANTHER" id="PTHR11781">
    <property type="entry name" value="IODOTHYRONINE DEIODINASE"/>
    <property type="match status" value="1"/>
</dbReference>
<dbReference type="PANTHER" id="PTHR11781:SF4">
    <property type="entry name" value="THYROXINE 5-DEIODINASE"/>
    <property type="match status" value="1"/>
</dbReference>
<dbReference type="Pfam" id="PF00837">
    <property type="entry name" value="T4_deiodinase"/>
    <property type="match status" value="1"/>
</dbReference>
<dbReference type="PIRSF" id="PIRSF001330">
    <property type="entry name" value="IOD"/>
    <property type="match status" value="1"/>
</dbReference>
<dbReference type="PIRSF" id="PIRSF500144">
    <property type="entry name" value="IODI_III"/>
    <property type="match status" value="1"/>
</dbReference>
<dbReference type="PROSITE" id="PS01205">
    <property type="entry name" value="T4_DEIODINASE"/>
    <property type="match status" value="1"/>
</dbReference>